<organism>
    <name type="scientific">Homo sapiens</name>
    <name type="common">Human</name>
    <dbReference type="NCBI Taxonomy" id="9606"/>
    <lineage>
        <taxon>Eukaryota</taxon>
        <taxon>Metazoa</taxon>
        <taxon>Chordata</taxon>
        <taxon>Craniata</taxon>
        <taxon>Vertebrata</taxon>
        <taxon>Euteleostomi</taxon>
        <taxon>Mammalia</taxon>
        <taxon>Eutheria</taxon>
        <taxon>Euarchontoglires</taxon>
        <taxon>Primates</taxon>
        <taxon>Haplorrhini</taxon>
        <taxon>Catarrhini</taxon>
        <taxon>Hominidae</taxon>
        <taxon>Homo</taxon>
    </lineage>
</organism>
<name>AIRE_HUMAN</name>
<gene>
    <name type="primary">AIRE</name>
    <name type="synonym">APECED</name>
</gene>
<comment type="function">
    <text evidence="1 7 21 25 33 34">Transcription factor playing an essential role to promote self-tolerance in the thymus by regulating the expression of a wide array of self-antigens that have the commonality of being tissue-restricted in their expression pattern in the periphery, called tissue restricted antigens (TRA) (PubMed:26084028). Binds to G-doublets in an A/T-rich environment; the preferred motif is a tandem repeat of 5'-ATTGGTTA-3' combined with a 5'-TTATTA-3' box. Binds to nucleosomes (By similarity). Binds to chromatin and interacts selectively with histone H3 that is not methylated at 'Lys-4', not phosphorylated at 'Thr-3' and not methylated at 'Arg-2'. Functions as a sensor of histone H3 modifications that are important for the epigenetic regulation of gene expression. Mainly expressed by medullary thymic epithelial cells (mTECs), induces the expression of thousands of tissue-restricted proteins, which are presented on major histocompatibility complex class I (MHC-I) and MHC-II molecules to developing T-cells percolating through the thymic medulla (PubMed:26084028). Also induces self-tolerance through other mechanisms such as the regulation of the mTEC differentiation program. Controls the medullary accumulation of thymic dendritic cells and the development of regulatory T-cell through the regulation of XCL1 expression. Regulates the production of CCR4 and CCR7 ligands in medullary thymic epithelial cells and alters the coordinated maturation and migration of thymocytes. In thimic B-cells, allows the presentation of licensing-dependent endogenous self-anitgen for negative selection. In secondary lymphoid organs, induces functional inactivation of CD4(+) T-cells. Expressed by a distinct bone marrow-derived population, induces self-tolerance through a mechanism that does not require regulatory T-cells and is resitant to innate inflammatory stimuli (By similarity).</text>
</comment>
<comment type="subunit">
    <text evidence="11 18 21 22 23">Homodimer and homotetramer. Interacts with CREBBP. Interacts preferentially with histone H3 that is not methylated at 'Lys-4'. Binds with lower affinity to histone H3 that is monomethylated at 'Lys-4'. Trimethylation of histone H3 at 'Lys-4' or phosphorylation at 'Thr-3' abolish the interaction. Binds with lower affinity to histone H3 that is acetylated at 'Lys-4', or that is acetylated at 'Lys-9' or trimethylated at 'Lys-9'. Binds histone H3 that is dimethylated at 'Arg-2' with very low affinity.</text>
</comment>
<comment type="interaction">
    <interactant intactId="EBI-1753081">
        <id>O43918</id>
    </interactant>
    <interactant intactId="EBI-1753081">
        <id>O43918</id>
        <label>AIRE</label>
    </interactant>
    <organismsDiffer>false</organismsDiffer>
    <experiments>3</experiments>
</comment>
<comment type="interaction">
    <interactant intactId="EBI-1753081">
        <id>O43918</id>
    </interactant>
    <interactant intactId="EBI-77321">
        <id>Q9UER7</id>
        <label>DAXX</label>
    </interactant>
    <organismsDiffer>false</organismsDiffer>
    <experiments>5</experiments>
</comment>
<comment type="interaction">
    <interactant intactId="EBI-1753081">
        <id>O43918</id>
    </interactant>
    <interactant intactId="EBI-79722">
        <id>P68431</id>
        <label>H3C12</label>
    </interactant>
    <organismsDiffer>false</organismsDiffer>
    <experiments>20</experiments>
</comment>
<comment type="interaction">
    <interactant intactId="EBI-1753081">
        <id>O43918</id>
    </interactant>
    <interactant intactId="EBI-389883">
        <id>P16333</id>
        <label>NCK1</label>
    </interactant>
    <organismsDiffer>false</organismsDiffer>
    <experiments>2</experiments>
</comment>
<comment type="interaction">
    <interactant intactId="EBI-1753081">
        <id>O43918</id>
    </interactant>
    <interactant intactId="EBI-352053">
        <id>P78527</id>
        <label>PRKDC</label>
    </interactant>
    <organismsDiffer>false</organismsDiffer>
    <experiments>2</experiments>
</comment>
<comment type="subcellular location">
    <subcellularLocation>
        <location evidence="17 25">Nucleus</location>
    </subcellularLocation>
    <subcellularLocation>
        <location evidence="7 17">Cytoplasm</location>
    </subcellularLocation>
    <text evidence="7 17 25">Predominantly nuclear but also cytoplasmic (PubMed:11274163, PubMed:14974083). Found in nuclear body-like structures (dots) and in a filamentous vimentin-like pattern (PubMed:11274163, PubMed:14974083, PubMed:26084028). Associated with tubular structures (PubMed:11274163, PubMed:14974083).</text>
</comment>
<comment type="alternative products">
    <event type="alternative splicing"/>
    <isoform>
        <id>O43918-1</id>
        <name>1</name>
        <name>AIRE-1</name>
        <sequence type="displayed"/>
    </isoform>
    <isoform>
        <id>O43918-2</id>
        <name>2</name>
        <name>AIRE-2</name>
        <sequence type="described" ref="VSP_004089"/>
    </isoform>
    <isoform>
        <id>O43918-3</id>
        <name>3</name>
        <name>AIRE-3</name>
        <sequence type="described" ref="VSP_004089 VSP_004090"/>
    </isoform>
    <isoform>
        <id>O43918-4</id>
        <name>4</name>
        <sequence type="described" ref="VSP_004089 VSP_043529"/>
    </isoform>
    <text>Additional isoforms seem to exist. Experimental confirmation may be lacking for some isoforms.</text>
</comment>
<comment type="tissue specificity">
    <text evidence="24">Widely expressed. Expressed at higher level in thymus (medullary epithelial cells and monocyte-dendritic cells), pancreas, adrenal cortex and testis. Expressed at lower level in the spleen, fetal liver and lymph nodes. In secondary lymphoid organs, expressed in a discrete population of bone marrow-derived toleregenic antigen presenting cells (APCs) called extrathymic AIRE expressing cells (eTAC)(at protein level) (PubMed:23993652). Isoform 2 and isoform 3 seem to be less frequently expressed than isoform 1, if at all.</text>
</comment>
<comment type="domain">
    <text>The L-X-X-L-L repeats may be implicated in binding to nuclear receptors.</text>
</comment>
<comment type="domain">
    <text>The HSR domain is required for localization on tubular structures (N-terminal part) and for homodimerization.</text>
</comment>
<comment type="domain">
    <text>Interacts via the first PHD domain with the N-terminus of histone H3 that is not methylated at 'Lys-4'. Disruption of the first PHD domain has been shown to lead to reduced transcriptional activity and to localization of the protein mainly in the cytoplasm in small granules. While the PHD zinc fingers are necessary for the transactivation capacity of the protein, other regions also modulate this function.</text>
</comment>
<comment type="PTM">
    <text evidence="11">Phosphorylated. Phosphorylation could trigger oligomerization.</text>
</comment>
<comment type="disease" evidence="6 7 8 9 10 12 13 14 15 16 17 18 19 20 21 23 25 26 27 29">
    <disease id="DI-01198">
        <name>Autoimmune polyendocrine syndrome 1, with or without reversible metaphyseal dysplasia</name>
        <acronym>APS1</acronym>
        <description>A rare disease characterized by the combination of chronic mucocutaneous candidiasis, hypoparathyroidism and Addison disease. Symptoms of mucocutaneous candidiasis manifest first, followed by hypotension or fatigue occurring as a result of Addison disease. APS1 is associated with other autoimmune disorders including diabetes mellitus, vitiligo, alopecia, hepatitis, pernicious anemia and primary hypothyroidism.</description>
        <dbReference type="MIM" id="240300"/>
    </disease>
    <text evidence="17 25 26">The disease is caused by variants affecting the gene represented in this entry. Most of the mutations alter the nucleus-cytoplasm distribution of AIRE and disturb its association with nuclear dots and cytoplasmic filaments. Most of the mutations also decrease transactivation of the protein. The HSR domain is responsible for the homomultimerization activity of AIRE. All the missense mutations of the HSR and the SAND domains decrease this activity, but those in other domains do not. The AIRE protein is present in soluble high-molecular-weight complexes. Mutations in the HSR domain and deletion of PHD zinc fingers disturb the formation of these complexes (PubMed:14974083). Heterozygous mutations within the PHD1 domain have dominant-negative effects and cause organ-specific autoimmune diseases (PubMed:26084028). Patients harbor extremely high-affinity, neutralizing autoantibodies, particularly against specific cytokines such as type I interferons which could protect them from some types of autoimmune diseases, like type I diabetes (PubMed:27426947).</text>
</comment>
<comment type="online information" name="Mendelian genes autoimmune regulator (AIRE)">
    <link uri="https://databases.lovd.nl/shared/genes/AIRE"/>
    <text>Leiden Open Variation Database (LOVD)</text>
</comment>
<proteinExistence type="evidence at protein level"/>
<sequence>MATDAALRRLLRLHRTEIAVAVDSAFPLLHALADHDVVPEDKFQETLHLKEKEGCPQAFHALLSWLLTQDSTAILDFWRVLFKDYNLERYGRLQPILDSFPKDVDLSQPRKGRKPPAVPKALVPPPRLPTKRKASEEARAAAPAALTPRGTASPGSQLKAKPPKKPESSAEQQRLPLGNGIQTMSASVQRAVAMSSGDVPGARGAVEGILIQQVFESGGSKKCIQVGGEFYTPSKFEDSGSGKNKARSSSGPKPLVRAKGAQGAAPGGGEARLGQQGSVPAPLALPSDPQLHQKNEDECAVCRDGGELICCDGCPRAFHLACLSPPLREIPSGTWRCSSCLQATVQEVQPRAEEPRPQEPPVETPLPPGLRSAGEEVRGPPGEPLAGMDTTLVYKHLPAPPSAAPLPGLDSSALHPLLCVGPEGQQNLAPGARCGVCGDGTDVLRCTHCAAAFHWRCHFPAGTSRPGTGLRCRSCSGDVTPAPVEGVLAPSPARLAPGPAKDDTASHEPALHRDDLESLLSEHTFDGILQWAIQSMARPAAPFPS</sequence>
<protein>
    <recommendedName>
        <fullName>Autoimmune regulator</fullName>
    </recommendedName>
    <alternativeName>
        <fullName>Autoimmune polyendocrinopathy candidiasis ectodermal dystrophy protein</fullName>
        <shortName>APECED protein</shortName>
    </alternativeName>
</protein>
<keyword id="KW-0002">3D-structure</keyword>
<keyword id="KW-0010">Activator</keyword>
<keyword id="KW-0025">Alternative splicing</keyword>
<keyword id="KW-0963">Cytoplasm</keyword>
<keyword id="KW-0903">Direct protein sequencing</keyword>
<keyword id="KW-0225">Disease variant</keyword>
<keyword id="KW-0238">DNA-binding</keyword>
<keyword id="KW-0479">Metal-binding</keyword>
<keyword id="KW-0539">Nucleus</keyword>
<keyword id="KW-0597">Phosphoprotein</keyword>
<keyword id="KW-1185">Reference proteome</keyword>
<keyword id="KW-0677">Repeat</keyword>
<keyword id="KW-0804">Transcription</keyword>
<keyword id="KW-0805">Transcription regulation</keyword>
<keyword id="KW-0862">Zinc</keyword>
<keyword id="KW-0863">Zinc-finger</keyword>
<feature type="chain" id="PRO_0000064513" description="Autoimmune regulator">
    <location>
        <begin position="1"/>
        <end position="545"/>
    </location>
</feature>
<feature type="domain" description="HSR" evidence="4">
    <location>
        <begin position="1"/>
        <end position="105"/>
    </location>
</feature>
<feature type="domain" description="SAND" evidence="3">
    <location>
        <begin position="181"/>
        <end position="280"/>
    </location>
</feature>
<feature type="zinc finger region" description="PHD-type 1" evidence="2">
    <location>
        <begin position="296"/>
        <end position="343"/>
    </location>
</feature>
<feature type="zinc finger region" description="PHD-type 2" evidence="2">
    <location>
        <begin position="434"/>
        <end position="475"/>
    </location>
</feature>
<feature type="region of interest" description="Disordered" evidence="5">
    <location>
        <begin position="101"/>
        <end position="178"/>
    </location>
</feature>
<feature type="region of interest" description="Disordered" evidence="5">
    <location>
        <begin position="234"/>
        <end position="290"/>
    </location>
</feature>
<feature type="region of interest" description="Interaction with histone H3 not methylated at 'Lys-4'">
    <location>
        <begin position="295"/>
        <end position="298"/>
    </location>
</feature>
<feature type="region of interest" description="Interaction with histone H3 not methylated at 'Lys-4'">
    <location>
        <begin position="304"/>
        <end position="312"/>
    </location>
</feature>
<feature type="region of interest" description="Interaction with histone H3 not methylated at 'Lys-4'">
    <location>
        <begin position="331"/>
        <end position="335"/>
    </location>
</feature>
<feature type="region of interest" description="Disordered" evidence="5">
    <location>
        <begin position="348"/>
        <end position="382"/>
    </location>
</feature>
<feature type="region of interest" description="Disordered" evidence="5">
    <location>
        <begin position="489"/>
        <end position="508"/>
    </location>
</feature>
<feature type="short sequence motif" description="LXXLL motif 1">
    <location>
        <begin position="7"/>
        <end position="11"/>
    </location>
</feature>
<feature type="short sequence motif" description="LXXLL motif 2">
    <location>
        <begin position="63"/>
        <end position="67"/>
    </location>
</feature>
<feature type="short sequence motif" description="LXXLL motif 3">
    <location>
        <begin position="414"/>
        <end position="418"/>
    </location>
</feature>
<feature type="short sequence motif" description="LXXLL motif 4">
    <location>
        <begin position="516"/>
        <end position="520"/>
    </location>
</feature>
<feature type="compositionally biased region" description="Pro residues" evidence="5">
    <location>
        <begin position="116"/>
        <end position="128"/>
    </location>
</feature>
<feature type="compositionally biased region" description="Low complexity" evidence="5">
    <location>
        <begin position="140"/>
        <end position="152"/>
    </location>
</feature>
<feature type="compositionally biased region" description="Pro residues" evidence="5">
    <location>
        <begin position="358"/>
        <end position="368"/>
    </location>
</feature>
<feature type="splice variant" id="VSP_004089" description="In isoform 2, isoform 3 and isoform 4." evidence="30 31">
    <original>MATDAALRRLLRLHRTEIAVAVDSAFPLLHALADHDVVPEDKFQETLHLKEKEGCPQAFHALLSWLLTQDSTAILDFWRVLFKDYNLERYGRLQPILDSFPKDVDLSQPRKGRKPPAVPKALVPPPRLPTKRKASEEARAAAPAALTPRGTASPGSQLKAKPPKKPESSAEQQRLPLGNGIQTMSASVQRAVAMSSGDVPGARGAVEGILIQQVFESGGSKKCIQVGGEFYTPSKFEDSGSGKNKARSSSGPKPLVRAKGAQGAAPGGGEARLGQQGSVPAPLALPSDPQLH</original>
    <variation>MWLVYSSGAPGTQQPARNRVFFPIGMAPGGVCWRPDGWGTGGQGRISGPGSMGAGQRLGSSGTQRCCWGSCFGKEVALRRVLHPS</variation>
    <location>
        <begin position="1"/>
        <end position="292"/>
    </location>
</feature>
<feature type="splice variant" id="VSP_043529" description="In isoform 4." evidence="30">
    <original>Q</original>
    <variation>PVCMGVSCLCQ</variation>
    <location>
        <position position="293"/>
    </location>
</feature>
<feature type="splice variant" id="VSP_004090" description="In isoform 3." evidence="31">
    <original>VRGPPGEPLAGMDTTLVYKHLPAPPSAAPLPGLDSSALHPLLCVGPEGQQNLAPGARCGVCGDGTDVLRCTHCAAAFHWRCHFPAGTSRPGTGLRCRSCSGDVTPAPVEGVLAPSPARLAPGPAKDDTASHEPALHRDDLESLLSEHTFDGILQWAIQSMARPAAPFPS</original>
    <variation>PRCQGWTPRPCTPYCVWVLRVSRTWLLVRVAGCAEMVRTCCGVLTAPLPSTGAATSQPAPPGPGRACAADPAQET</variation>
    <location>
        <begin position="377"/>
        <end position="545"/>
    </location>
</feature>
<feature type="sequence variant" id="VAR_026480" description="In APS1; dbSNP:rs179363875." evidence="16">
    <original>R</original>
    <variation>C</variation>
    <location>
        <position position="15"/>
    </location>
</feature>
<feature type="sequence variant" id="VAR_013713" description="In APS1; prevents homooligomerization; slightly alters subcellular localization; no effect on the transcriptional transactivation activity; dbSNP:rs179363876." evidence="9 17 19">
    <original>R</original>
    <variation>L</variation>
    <location>
        <position position="15"/>
    </location>
</feature>
<feature type="sequence variant" id="VAR_013714" description="In APS1; prevents homooligomerization; slightly alters subcellular localization; no effect on the transcriptional transactivation activity; dbSNP:rs179363877." evidence="9 10 17 19">
    <original>T</original>
    <variation>M</variation>
    <location>
        <position position="16"/>
    </location>
</feature>
<feature type="sequence variant" id="VAR_026481" description="In APS1; no effect on homooligomerization; no effect on subcellular localization; no effect on the transcriptional transactivation activity; dbSNP:rs179363886." evidence="14 17">
    <original>A</original>
    <variation>V</variation>
    <location>
        <position position="21"/>
    </location>
</feature>
<feature type="sequence variant" id="VAR_026482" description="In APS1; prevents homodimerization." evidence="19">
    <location>
        <begin position="22"/>
        <end position="23"/>
    </location>
</feature>
<feature type="sequence variant" id="VAR_005004" description="In APS1; abolishes association with cytoplasmic tubular structures and homodimerization; loss of doted nuclear localization; nuclear smear; severe decrease of transcriptional transactivation activity; dbSNP:rs179363878." evidence="7 9 17 20 25 29">
    <original>L</original>
    <variation>P</variation>
    <location>
        <position position="28"/>
    </location>
</feature>
<feature type="sequence variant" id="VAR_013715" description="In APS1; dbSNP:rs179363879." evidence="15 17">
    <original>L</original>
    <variation>P</variation>
    <location>
        <position position="29"/>
    </location>
</feature>
<feature type="sequence variant" id="VAR_026483" description="In APS1; loss of homooligomerization; dbSNP:rs179363887." evidence="19">
    <original>F</original>
    <variation>S</variation>
    <location>
        <position position="77"/>
    </location>
</feature>
<feature type="sequence variant" id="VAR_013716" description="In APS1; loss of homooligomerization; dbSNP:rs179363880." evidence="9 10 13 17 19">
    <original>W</original>
    <variation>R</variation>
    <location>
        <position position="78"/>
    </location>
</feature>
<feature type="sequence variant" id="VAR_013717" description="In APS1; dbSNP:rs179363881." evidence="6 9 17">
    <original>V</original>
    <variation>L</variation>
    <location>
        <position position="80"/>
    </location>
</feature>
<feature type="sequence variant" id="VAR_005005" description="In APS1; dbSNP:rs121434255." evidence="9 17 27">
    <original>K</original>
    <variation>E</variation>
    <location>
        <position position="83"/>
    </location>
</feature>
<feature type="sequence variant" id="VAR_013718" description="In APS1; no significant effect on transcriptional transactivation activity; dbSNP:rs179363882." evidence="6 9 14 20">
    <original>Y</original>
    <variation>C</variation>
    <location>
        <position position="85"/>
    </location>
</feature>
<feature type="sequence variant" id="VAR_013719" description="In APS1; decreases doted nuclear localization; dbSNP:rs179363883." evidence="9 17 25">
    <original>Y</original>
    <variation>C</variation>
    <location>
        <position position="90"/>
    </location>
</feature>
<feature type="sequence variant" id="VAR_013720" description="In APS1; dbSNP:rs179363884." evidence="9 17">
    <original>L</original>
    <variation>R</variation>
    <location>
        <position position="93"/>
    </location>
</feature>
<feature type="sequence variant" id="VAR_014422" description="In APS1; changes the subcellular localization and in addition disrupts the transactivating capacity of the wild-type AIRE; acts with a dominant negative effect by binding to the wild-type AIRE thus preventing the protein from forming the complexes needed for transactivation; dbSNP:rs121434257." evidence="12 17 20">
    <original>G</original>
    <variation>W</variation>
    <location>
        <position position="228"/>
    </location>
</feature>
<feature type="sequence variant" id="VAR_026484" description="In APS1; benign; does not affect transcriptional transactivation activity; dbSNP:rs34397615." evidence="13 20">
    <original>P</original>
    <variation>L</variation>
    <location>
        <position position="252"/>
    </location>
</feature>
<feature type="sequence variant" id="VAR_005006" description="In dbSNP:rs1800520." evidence="9 16 28">
    <original>S</original>
    <variation>R</variation>
    <location>
        <position position="278"/>
    </location>
</feature>
<feature type="sequence variant" id="VAR_076940" description="In dbSNP:rs763636007." evidence="25">
    <original>E</original>
    <variation>K</variation>
    <location>
        <position position="298"/>
    </location>
</feature>
<feature type="sequence variant" id="VAR_076941" description="In dbSNP:rs751066946." evidence="25">
    <original>C</original>
    <variation>W</variation>
    <location>
        <position position="299"/>
    </location>
</feature>
<feature type="sequence variant" id="VAR_013721" description="In APS1; no effect on protein structure or on interaction with histone H3; no effect on doted nuclear localization; dominant-negative effect on regulation of target gene transcription; dbSNP:rs150634562." evidence="9 18 21 23 25">
    <original>V</original>
    <variation>M</variation>
    <location>
        <position position="301"/>
    </location>
</feature>
<feature type="sequence variant" id="VAR_076942" description="Found in patients with hypothyroidism and organ- and cytokine-specific autoantibodies; no effect on doted nuclear localization; dominant-negative effect on regulation of target gene transcription." evidence="25">
    <original>C</original>
    <variation>Y</variation>
    <location>
        <position position="302"/>
    </location>
</feature>
<feature type="sequence variant" id="VAR_076943" description="In dbSNP:rs139808903." evidence="25">
    <original>R</original>
    <variation>Q</variation>
    <location>
        <position position="303"/>
    </location>
</feature>
<feature type="sequence variant" id="VAR_076944" description="In dbSNP:rs778929451." evidence="25">
    <original>R</original>
    <variation>W</variation>
    <location>
        <position position="303"/>
    </location>
</feature>
<feature type="sequence variant" id="VAR_013722" description="Found in a patient with pernicious anemia and neuropathy; uncertain significance; no effect on doted nuclear localization; dominant-negative effect on regulation of target gene transcription." evidence="25">
    <original>G</original>
    <variation>S</variation>
    <location>
        <position position="305"/>
    </location>
</feature>
<feature type="sequence variant" id="VAR_076945" description="In dbSNP:rs754932526." evidence="25">
    <original>G</original>
    <variation>R</variation>
    <location>
        <position position="306"/>
    </location>
</feature>
<feature type="sequence variant" id="VAR_076946" description="In dbSNP:rs74162062." evidence="25">
    <original>I</original>
    <variation>M</variation>
    <location>
        <position position="309"/>
    </location>
</feature>
<feature type="sequence variant" id="VAR_013723" description="In APS1; impairs zinc binding and folding of the PHD-type 1 zinc finger; dominant-negative effect on the regulation of target gene transcription; no effect on doted nuclear localization; dominant-negative effect on regulation of target gene transcription; dbSNP:rs386833674." evidence="6 9 14 18 21 23 25">
    <original>C</original>
    <variation>Y</variation>
    <location>
        <position position="311"/>
    </location>
</feature>
<feature type="sequence variant" id="VAR_076947" description="In dbSNP:rs202027254." evidence="25">
    <original>R</original>
    <variation>Q</variation>
    <location>
        <position position="316"/>
    </location>
</feature>
<feature type="sequence variant" id="VAR_076948" description="Found in a patient with pernicious anemia; uncertain significance; dbSNP:rs139874934." evidence="25">
    <original>R</original>
    <variation>W</variation>
    <location>
        <position position="316"/>
    </location>
</feature>
<feature type="sequence variant" id="VAR_076949" description="In dbSNP:rs776951380." evidence="25">
    <original>H</original>
    <variation>P</variation>
    <location>
        <position position="319"/>
    </location>
</feature>
<feature type="sequence variant" id="VAR_026485" description="In APS1; no significant effect on structure, but may alter protein interactions; no effect on doted nuclear localization; dominant-negative effect on regulation of target gene transcription; dbSNP:rs179363885." evidence="8 23 25">
    <original>P</original>
    <variation>L</variation>
    <location>
        <position position="326"/>
    </location>
</feature>
<feature type="sequence variant" id="VAR_013724" description="In APS1; alters folding of the PHD-type 1 zinc finger; dbSNP:rs179363885." evidence="6 9 17 18 23">
    <original>P</original>
    <variation>Q</variation>
    <location>
        <position position="326"/>
    </location>
</feature>
<feature type="sequence variant" id="VAR_076950" description="Found in a patient with acrofacial vitiligo and gastric parietal cell autoantibodies; no effect on doted nuclear localization; dominant-negative effect on regulation of target gene transcription; dbSNP:rs775921321." evidence="25">
    <original>R</original>
    <variation>Q</variation>
    <location>
        <position position="328"/>
    </location>
</feature>
<feature type="sequence variant" id="VAR_076951" description="In dbSNP:rs74162063." evidence="25">
    <original>R</original>
    <variation>W</variation>
    <location>
        <position position="328"/>
    </location>
</feature>
<feature type="sequence variant" id="VAR_076952" description="In dbSNP:rs766901260." evidence="25">
    <original>S</original>
    <variation>R</variation>
    <location>
        <position position="332"/>
    </location>
</feature>
<feature type="sequence variant" id="VAR_076953" description="Found in a patient with acrofacial vitiligo and gastric parietal cell autoantibodies; uncertain significance; dbSNP:rs769470638." evidence="25">
    <original>V</original>
    <variation>A</variation>
    <location>
        <position position="484"/>
    </location>
</feature>
<feature type="sequence variant" id="VAR_026486" description="In APS1; dbSNP:rs179363889." evidence="13">
    <original>P</original>
    <variation>L</variation>
    <location>
        <position position="539"/>
    </location>
</feature>
<feature type="mutagenesis site" description="Loss of doted nuclear location, forms nuclear smears. Loss of transactivation activity on target genes transcription." evidence="25">
    <original>LL</original>
    <variation>PP</variation>
    <location>
        <begin position="28"/>
        <end position="29"/>
    </location>
</feature>
<feature type="mutagenesis site" description="Loss of transactivation activity on target gene transcription; no dominant-negative effect on target gene transcription. Loss of doted nuclear localization." evidence="25">
    <original>L</original>
    <variation>P</variation>
    <location>
        <position position="97"/>
    </location>
</feature>
<feature type="mutagenesis site" description="Abolishes interaction with histone H3." evidence="22">
    <original>N</original>
    <variation>A</variation>
    <location>
        <position position="295"/>
    </location>
</feature>
<feature type="mutagenesis site" description="Strongly reduces interaction with unmethylated histone H3 and abolishes interaction with histone H3 trimethylated at 'Lys-4'. No effect on doted nuclear localization. Dominant-negative effect on target gene transcription." evidence="21 25">
    <original>D</original>
    <variation>A</variation>
    <location>
        <position position="297"/>
    </location>
</feature>
<feature type="mutagenesis site" description="Reduces interaction with histone H3." evidence="22">
    <original>E</original>
    <variation>A</variation>
    <location>
        <position position="298"/>
    </location>
</feature>
<feature type="mutagenesis site" description="Reduces transcriptional activation." evidence="7">
    <original>C</original>
    <variation>P</variation>
    <location>
        <position position="302"/>
    </location>
</feature>
<feature type="mutagenesis site" description="Alters protein folding and abolishes interaction with histone H3. No effect on doted nuclear localization. Dominant-negative effect on target gene transcription." evidence="22 25">
    <original>R</original>
    <variation>P</variation>
    <location>
        <position position="303"/>
    </location>
</feature>
<feature type="mutagenesis site" description="Strongly reduces interaction with histone H3." evidence="22">
    <original>D</original>
    <variation>A</variation>
    <location>
        <position position="304"/>
    </location>
</feature>
<feature type="mutagenesis site" description="Reduces interaction with histone H3." evidence="22">
    <original>E</original>
    <variation>A</variation>
    <location>
        <position position="307"/>
    </location>
</feature>
<feature type="mutagenesis site" description="Abolishes interaction with histone H3." evidence="21">
    <original>D</original>
    <variation>A</variation>
    <location>
        <position position="312"/>
    </location>
</feature>
<feature type="mutagenesis site" description="No effect on doted nuclear localization. Dominant-negative effect on target gene transcription." evidence="25">
    <original>D</original>
    <variation>N</variation>
    <location>
        <position position="312"/>
    </location>
</feature>
<feature type="mutagenesis site" description="Reduces transcription activation." evidence="7">
    <original>C</original>
    <variation>P</variation>
    <location>
        <position position="437"/>
    </location>
</feature>
<feature type="mutagenesis site" description="Dominant-negative effect on regulation of target gene transcription." evidence="25">
    <original>C</original>
    <variation>G</variation>
    <location>
        <position position="446"/>
    </location>
</feature>
<feature type="mutagenesis site" description="No effect on regulation of target gene transcription." evidence="25">
    <original>R</original>
    <variation>C</variation>
    <location>
        <position position="471"/>
    </location>
</feature>
<feature type="sequence conflict" description="In Ref. 3; CAA08759." evidence="32" ref="3">
    <original>CGDGTDVLRCTHCAAAFHWRCHFPAGTSRPG</original>
    <variation>W</variation>
    <location>
        <begin position="437"/>
        <end position="467"/>
    </location>
</feature>
<feature type="strand" evidence="35">
    <location>
        <begin position="298"/>
        <end position="303"/>
    </location>
</feature>
<feature type="strand" evidence="36">
    <location>
        <begin position="306"/>
        <end position="310"/>
    </location>
</feature>
<feature type="strand" evidence="36">
    <location>
        <begin position="312"/>
        <end position="314"/>
    </location>
</feature>
<feature type="strand" evidence="36">
    <location>
        <begin position="317"/>
        <end position="319"/>
    </location>
</feature>
<feature type="turn" evidence="35">
    <location>
        <begin position="320"/>
        <end position="322"/>
    </location>
</feature>
<feature type="strand" evidence="35">
    <location>
        <begin position="323"/>
        <end position="325"/>
    </location>
</feature>
<feature type="helix" evidence="35">
    <location>
        <begin position="338"/>
        <end position="342"/>
    </location>
</feature>
<feature type="turn" evidence="37">
    <location>
        <begin position="423"/>
        <end position="426"/>
    </location>
</feature>
<feature type="turn" evidence="37">
    <location>
        <begin position="435"/>
        <end position="437"/>
    </location>
</feature>
<feature type="strand" evidence="37">
    <location>
        <begin position="447"/>
        <end position="449"/>
    </location>
</feature>
<feature type="helix" evidence="37">
    <location>
        <begin position="455"/>
        <end position="458"/>
    </location>
</feature>
<feature type="turn" evidence="37">
    <location>
        <begin position="460"/>
        <end position="462"/>
    </location>
</feature>
<feature type="strand" evidence="37">
    <location>
        <begin position="467"/>
        <end position="469"/>
    </location>
</feature>
<feature type="turn" evidence="37">
    <location>
        <begin position="473"/>
        <end position="476"/>
    </location>
</feature>
<accession>O43918</accession>
<accession>B2RP50</accession>
<accession>O43922</accession>
<accession>O43932</accession>
<accession>O75745</accession>
<dbReference type="EMBL" id="AB006682">
    <property type="protein sequence ID" value="BAA23988.1"/>
    <property type="molecule type" value="mRNA"/>
</dbReference>
<dbReference type="EMBL" id="AB006683">
    <property type="protein sequence ID" value="BAA23989.1"/>
    <property type="molecule type" value="mRNA"/>
</dbReference>
<dbReference type="EMBL" id="AB006684">
    <property type="protein sequence ID" value="BAA23990.1"/>
    <property type="molecule type" value="Genomic_DNA"/>
</dbReference>
<dbReference type="EMBL" id="AB006684">
    <property type="protein sequence ID" value="BAA23991.1"/>
    <property type="molecule type" value="Genomic_DNA"/>
</dbReference>
<dbReference type="EMBL" id="AB006684">
    <property type="protein sequence ID" value="BAA23992.1"/>
    <property type="molecule type" value="Genomic_DNA"/>
</dbReference>
<dbReference type="EMBL" id="AB006685">
    <property type="protein sequence ID" value="BAA23993.1"/>
    <property type="molecule type" value="mRNA"/>
</dbReference>
<dbReference type="EMBL" id="Z97990">
    <property type="protein sequence ID" value="CAB10790.1"/>
    <property type="molecule type" value="mRNA"/>
</dbReference>
<dbReference type="EMBL" id="AJ009610">
    <property type="protein sequence ID" value="CAA08759.1"/>
    <property type="molecule type" value="Genomic_DNA"/>
</dbReference>
<dbReference type="EMBL" id="AP001754">
    <property type="protein sequence ID" value="BAA95560.1"/>
    <property type="molecule type" value="Genomic_DNA"/>
</dbReference>
<dbReference type="EMBL" id="AP001060">
    <property type="status" value="NOT_ANNOTATED_CDS"/>
    <property type="molecule type" value="Genomic_DNA"/>
</dbReference>
<dbReference type="EMBL" id="CH471079">
    <property type="protein sequence ID" value="EAX09443.1"/>
    <property type="molecule type" value="Genomic_DNA"/>
</dbReference>
<dbReference type="EMBL" id="BC137268">
    <property type="protein sequence ID" value="AAI37269.1"/>
    <property type="molecule type" value="mRNA"/>
</dbReference>
<dbReference type="EMBL" id="BC137270">
    <property type="protein sequence ID" value="AAI37271.1"/>
    <property type="molecule type" value="mRNA"/>
</dbReference>
<dbReference type="CCDS" id="CCDS13706.1">
    <molecule id="O43918-1"/>
</dbReference>
<dbReference type="RefSeq" id="NP_000374.1">
    <molecule id="O43918-1"/>
    <property type="nucleotide sequence ID" value="NM_000383.4"/>
</dbReference>
<dbReference type="PDB" id="1XWH">
    <property type="method" value="NMR"/>
    <property type="chains" value="A=293-354"/>
</dbReference>
<dbReference type="PDB" id="2KE1">
    <property type="method" value="NMR"/>
    <property type="chains" value="A=293-354"/>
</dbReference>
<dbReference type="PDB" id="2KFT">
    <property type="method" value="NMR"/>
    <property type="chains" value="A=294-347"/>
</dbReference>
<dbReference type="PDB" id="2LRI">
    <property type="method" value="NMR"/>
    <property type="chains" value="C=423-485"/>
</dbReference>
<dbReference type="PDBsum" id="1XWH"/>
<dbReference type="PDBsum" id="2KE1"/>
<dbReference type="PDBsum" id="2KFT"/>
<dbReference type="PDBsum" id="2LRI"/>
<dbReference type="BMRB" id="O43918"/>
<dbReference type="SMR" id="O43918"/>
<dbReference type="BioGRID" id="106823">
    <property type="interactions" value="104"/>
</dbReference>
<dbReference type="CORUM" id="O43918"/>
<dbReference type="DIP" id="DIP-47504N"/>
<dbReference type="FunCoup" id="O43918">
    <property type="interactions" value="730"/>
</dbReference>
<dbReference type="IntAct" id="O43918">
    <property type="interactions" value="39"/>
</dbReference>
<dbReference type="MINT" id="O43918"/>
<dbReference type="STRING" id="9606.ENSP00000291582"/>
<dbReference type="iPTMnet" id="O43918"/>
<dbReference type="PhosphoSitePlus" id="O43918"/>
<dbReference type="BioMuta" id="AIRE"/>
<dbReference type="jPOST" id="O43918"/>
<dbReference type="MassIVE" id="O43918"/>
<dbReference type="PaxDb" id="9606-ENSP00000291582"/>
<dbReference type="PeptideAtlas" id="O43918"/>
<dbReference type="Antibodypedia" id="10157">
    <property type="antibodies" value="632 antibodies from 42 providers"/>
</dbReference>
<dbReference type="DNASU" id="326"/>
<dbReference type="Ensembl" id="ENST00000291582.6">
    <molecule id="O43918-1"/>
    <property type="protein sequence ID" value="ENSP00000291582.5"/>
    <property type="gene ID" value="ENSG00000160224.17"/>
</dbReference>
<dbReference type="GeneID" id="326"/>
<dbReference type="KEGG" id="hsa:326"/>
<dbReference type="MANE-Select" id="ENST00000291582.6">
    <property type="protein sequence ID" value="ENSP00000291582.5"/>
    <property type="RefSeq nucleotide sequence ID" value="NM_000383.4"/>
    <property type="RefSeq protein sequence ID" value="NP_000374.1"/>
</dbReference>
<dbReference type="UCSC" id="uc002zei.4">
    <molecule id="O43918-1"/>
    <property type="organism name" value="human"/>
</dbReference>
<dbReference type="AGR" id="HGNC:360"/>
<dbReference type="CTD" id="326"/>
<dbReference type="DisGeNET" id="326"/>
<dbReference type="GeneCards" id="AIRE"/>
<dbReference type="HGNC" id="HGNC:360">
    <property type="gene designation" value="AIRE"/>
</dbReference>
<dbReference type="HPA" id="ENSG00000160224">
    <property type="expression patterns" value="Tissue enhanced (lymphoid)"/>
</dbReference>
<dbReference type="MalaCards" id="AIRE"/>
<dbReference type="MIM" id="109100">
    <property type="type" value="phenotype"/>
</dbReference>
<dbReference type="MIM" id="240300">
    <property type="type" value="phenotype"/>
</dbReference>
<dbReference type="MIM" id="607358">
    <property type="type" value="gene"/>
</dbReference>
<dbReference type="neXtProt" id="NX_O43918"/>
<dbReference type="OpenTargets" id="ENSG00000160224"/>
<dbReference type="Orphanet" id="3453">
    <property type="disease" value="Autoimmune polyendocrinopathy type 1"/>
</dbReference>
<dbReference type="Orphanet" id="189466">
    <property type="disease" value="Familial isolated hypoparathyroidism due to impaired PTH secretion"/>
</dbReference>
<dbReference type="PharmGKB" id="PA24654"/>
<dbReference type="VEuPathDB" id="HostDB:ENSG00000160224"/>
<dbReference type="eggNOG" id="KOG0383">
    <property type="taxonomic scope" value="Eukaryota"/>
</dbReference>
<dbReference type="GeneTree" id="ENSGT00940000161104"/>
<dbReference type="HOGENOM" id="CLU_042233_1_0_1"/>
<dbReference type="InParanoid" id="O43918"/>
<dbReference type="OMA" id="DVLRCTH"/>
<dbReference type="OrthoDB" id="787137at2759"/>
<dbReference type="PAN-GO" id="O43918">
    <property type="GO annotations" value="11 GO annotations based on evolutionary models"/>
</dbReference>
<dbReference type="PhylomeDB" id="O43918"/>
<dbReference type="TreeFam" id="TF336193"/>
<dbReference type="PathwayCommons" id="O43918"/>
<dbReference type="SignaLink" id="O43918"/>
<dbReference type="SIGNOR" id="O43918"/>
<dbReference type="BioGRID-ORCS" id="326">
    <property type="hits" value="11 hits in 1166 CRISPR screens"/>
</dbReference>
<dbReference type="EvolutionaryTrace" id="O43918"/>
<dbReference type="GeneWiki" id="Autoimmune_regulator"/>
<dbReference type="GenomeRNAi" id="326"/>
<dbReference type="Pharos" id="O43918">
    <property type="development level" value="Tbio"/>
</dbReference>
<dbReference type="PRO" id="PR:O43918"/>
<dbReference type="Proteomes" id="UP000005640">
    <property type="component" value="Chromosome 21"/>
</dbReference>
<dbReference type="RNAct" id="O43918">
    <property type="molecule type" value="protein"/>
</dbReference>
<dbReference type="Bgee" id="ENSG00000160224">
    <property type="expression patterns" value="Expressed in male germ line stem cell (sensu Vertebrata) in testis and 78 other cell types or tissues"/>
</dbReference>
<dbReference type="GO" id="GO:0005737">
    <property type="term" value="C:cytoplasm"/>
    <property type="evidence" value="ECO:0007669"/>
    <property type="project" value="UniProtKB-SubCell"/>
</dbReference>
<dbReference type="GO" id="GO:0001674">
    <property type="term" value="C:female germ cell nucleus"/>
    <property type="evidence" value="ECO:0007669"/>
    <property type="project" value="Ensembl"/>
</dbReference>
<dbReference type="GO" id="GO:0001673">
    <property type="term" value="C:male germ cell nucleus"/>
    <property type="evidence" value="ECO:0007669"/>
    <property type="project" value="Ensembl"/>
</dbReference>
<dbReference type="GO" id="GO:0016604">
    <property type="term" value="C:nuclear body"/>
    <property type="evidence" value="ECO:0000250"/>
    <property type="project" value="UniProtKB"/>
</dbReference>
<dbReference type="GO" id="GO:0005634">
    <property type="term" value="C:nucleus"/>
    <property type="evidence" value="ECO:0000318"/>
    <property type="project" value="GO_Central"/>
</dbReference>
<dbReference type="GO" id="GO:0003682">
    <property type="term" value="F:chromatin binding"/>
    <property type="evidence" value="ECO:0000314"/>
    <property type="project" value="UniProtKB"/>
</dbReference>
<dbReference type="GO" id="GO:0042393">
    <property type="term" value="F:histone binding"/>
    <property type="evidence" value="ECO:0000314"/>
    <property type="project" value="UniProtKB"/>
</dbReference>
<dbReference type="GO" id="GO:0042802">
    <property type="term" value="F:identical protein binding"/>
    <property type="evidence" value="ECO:0000353"/>
    <property type="project" value="IntAct"/>
</dbReference>
<dbReference type="GO" id="GO:0000977">
    <property type="term" value="F:RNA polymerase II transcription regulatory region sequence-specific DNA binding"/>
    <property type="evidence" value="ECO:0000314"/>
    <property type="project" value="NTNU_SB"/>
</dbReference>
<dbReference type="GO" id="GO:0045182">
    <property type="term" value="F:translation regulator activity"/>
    <property type="evidence" value="ECO:0007669"/>
    <property type="project" value="InterPro"/>
</dbReference>
<dbReference type="GO" id="GO:0008270">
    <property type="term" value="F:zinc ion binding"/>
    <property type="evidence" value="ECO:0000314"/>
    <property type="project" value="UniProtKB"/>
</dbReference>
<dbReference type="GO" id="GO:0002509">
    <property type="term" value="P:central tolerance induction to self antigen"/>
    <property type="evidence" value="ECO:0000315"/>
    <property type="project" value="UniProtKB"/>
</dbReference>
<dbReference type="GO" id="GO:0006959">
    <property type="term" value="P:humoral immune response"/>
    <property type="evidence" value="ECO:0000318"/>
    <property type="project" value="GO_Central"/>
</dbReference>
<dbReference type="GO" id="GO:0006955">
    <property type="term" value="P:immune response"/>
    <property type="evidence" value="ECO:0000304"/>
    <property type="project" value="ProtInc"/>
</dbReference>
<dbReference type="GO" id="GO:0045060">
    <property type="term" value="P:negative thymic T cell selection"/>
    <property type="evidence" value="ECO:0000318"/>
    <property type="project" value="GO_Central"/>
</dbReference>
<dbReference type="GO" id="GO:0002458">
    <property type="term" value="P:peripheral T cell tolerance induction"/>
    <property type="evidence" value="ECO:0000250"/>
    <property type="project" value="UniProtKB"/>
</dbReference>
<dbReference type="GO" id="GO:0032722">
    <property type="term" value="P:positive regulation of chemokine production"/>
    <property type="evidence" value="ECO:0000250"/>
    <property type="project" value="UniProtKB"/>
</dbReference>
<dbReference type="GO" id="GO:0045893">
    <property type="term" value="P:positive regulation of DNA-templated transcription"/>
    <property type="evidence" value="ECO:0000314"/>
    <property type="project" value="UniProtKB"/>
</dbReference>
<dbReference type="GO" id="GO:0045944">
    <property type="term" value="P:positive regulation of transcription by RNA polymerase II"/>
    <property type="evidence" value="ECO:0000315"/>
    <property type="project" value="NTNU_SB"/>
</dbReference>
<dbReference type="GO" id="GO:0006355">
    <property type="term" value="P:regulation of DNA-templated transcription"/>
    <property type="evidence" value="ECO:0000314"/>
    <property type="project" value="UniProtKB"/>
</dbReference>
<dbReference type="GO" id="GO:2000410">
    <property type="term" value="P:regulation of thymocyte migration"/>
    <property type="evidence" value="ECO:0000250"/>
    <property type="project" value="UniProtKB"/>
</dbReference>
<dbReference type="GO" id="GO:0097536">
    <property type="term" value="P:thymus epithelium morphogenesis"/>
    <property type="evidence" value="ECO:0000250"/>
    <property type="project" value="UniProtKB"/>
</dbReference>
<dbReference type="GO" id="GO:0006366">
    <property type="term" value="P:transcription by RNA polymerase II"/>
    <property type="evidence" value="ECO:0007669"/>
    <property type="project" value="Ensembl"/>
</dbReference>
<dbReference type="CDD" id="cd15539">
    <property type="entry name" value="PHD1_AIRE"/>
    <property type="match status" value="1"/>
</dbReference>
<dbReference type="CDD" id="cd15540">
    <property type="entry name" value="PHD2_AIRE"/>
    <property type="match status" value="1"/>
</dbReference>
<dbReference type="FunFam" id="3.10.390.10:FF:000006">
    <property type="entry name" value="Autoimmune regulator"/>
    <property type="match status" value="1"/>
</dbReference>
<dbReference type="FunFam" id="3.30.40.10:FF:000374">
    <property type="entry name" value="Autoimmune regulator"/>
    <property type="match status" value="1"/>
</dbReference>
<dbReference type="FunFam" id="3.30.40.10:FF:000446">
    <property type="entry name" value="Autoimmune regulator"/>
    <property type="match status" value="1"/>
</dbReference>
<dbReference type="Gene3D" id="3.10.390.10">
    <property type="entry name" value="SAND domain-like"/>
    <property type="match status" value="1"/>
</dbReference>
<dbReference type="Gene3D" id="3.30.40.10">
    <property type="entry name" value="Zinc/RING finger domain, C3HC4 (zinc finger)"/>
    <property type="match status" value="2"/>
</dbReference>
<dbReference type="InterPro" id="IPR008087">
    <property type="entry name" value="AIRE"/>
</dbReference>
<dbReference type="InterPro" id="IPR042580">
    <property type="entry name" value="AIRE_PHD2"/>
</dbReference>
<dbReference type="InterPro" id="IPR004865">
    <property type="entry name" value="HSR_dom"/>
</dbReference>
<dbReference type="InterPro" id="IPR010919">
    <property type="entry name" value="SAND-like_dom_sf"/>
</dbReference>
<dbReference type="InterPro" id="IPR000770">
    <property type="entry name" value="SAND_dom"/>
</dbReference>
<dbReference type="InterPro" id="IPR043563">
    <property type="entry name" value="Sp110/Sp140/Sp140L-like"/>
</dbReference>
<dbReference type="InterPro" id="IPR019786">
    <property type="entry name" value="Zinc_finger_PHD-type_CS"/>
</dbReference>
<dbReference type="InterPro" id="IPR011011">
    <property type="entry name" value="Znf_FYVE_PHD"/>
</dbReference>
<dbReference type="InterPro" id="IPR001965">
    <property type="entry name" value="Znf_PHD"/>
</dbReference>
<dbReference type="InterPro" id="IPR019787">
    <property type="entry name" value="Znf_PHD-finger"/>
</dbReference>
<dbReference type="InterPro" id="IPR013083">
    <property type="entry name" value="Znf_RING/FYVE/PHD"/>
</dbReference>
<dbReference type="PANTHER" id="PTHR46386:SF11">
    <property type="entry name" value="AUTOIMMUNE REGULATOR"/>
    <property type="match status" value="1"/>
</dbReference>
<dbReference type="PANTHER" id="PTHR46386">
    <property type="entry name" value="NUCLEAR BODY PROTEIN SP140"/>
    <property type="match status" value="1"/>
</dbReference>
<dbReference type="Pfam" id="PF03172">
    <property type="entry name" value="HSR"/>
    <property type="match status" value="1"/>
</dbReference>
<dbReference type="Pfam" id="PF00628">
    <property type="entry name" value="PHD"/>
    <property type="match status" value="1"/>
</dbReference>
<dbReference type="Pfam" id="PF01342">
    <property type="entry name" value="SAND"/>
    <property type="match status" value="1"/>
</dbReference>
<dbReference type="PRINTS" id="PR01711">
    <property type="entry name" value="AIREGULATOR"/>
</dbReference>
<dbReference type="SMART" id="SM00249">
    <property type="entry name" value="PHD"/>
    <property type="match status" value="2"/>
</dbReference>
<dbReference type="SMART" id="SM00258">
    <property type="entry name" value="SAND"/>
    <property type="match status" value="1"/>
</dbReference>
<dbReference type="SUPFAM" id="SSF57903">
    <property type="entry name" value="FYVE/PHD zinc finger"/>
    <property type="match status" value="2"/>
</dbReference>
<dbReference type="SUPFAM" id="SSF63763">
    <property type="entry name" value="SAND domain-like"/>
    <property type="match status" value="1"/>
</dbReference>
<dbReference type="PROSITE" id="PS51414">
    <property type="entry name" value="HSR"/>
    <property type="match status" value="1"/>
</dbReference>
<dbReference type="PROSITE" id="PS50864">
    <property type="entry name" value="SAND"/>
    <property type="match status" value="1"/>
</dbReference>
<dbReference type="PROSITE" id="PS01359">
    <property type="entry name" value="ZF_PHD_1"/>
    <property type="match status" value="2"/>
</dbReference>
<dbReference type="PROSITE" id="PS50016">
    <property type="entry name" value="ZF_PHD_2"/>
    <property type="match status" value="1"/>
</dbReference>
<reference key="1">
    <citation type="journal article" date="1997" name="Nat. Genet.">
        <title>Positional cloning of the APECED gene.</title>
        <authorList>
            <person name="Nagamine K."/>
            <person name="Peterson P."/>
            <person name="Scott H.S."/>
            <person name="Kudoh J."/>
            <person name="Minoshima S."/>
            <person name="Heino M."/>
            <person name="Krohn K.J.E."/>
            <person name="Lalioti M.D."/>
            <person name="Mullis P.E."/>
            <person name="Antonarakis S.E."/>
            <person name="Kawasaki K."/>
            <person name="Asakawa S."/>
            <person name="Ito F."/>
            <person name="Shimizu N."/>
        </authorList>
    </citation>
    <scope>NUCLEOTIDE SEQUENCE [GENOMIC DNA / MRNA] (ISOFORMS 1; 2 AND 3)</scope>
    <scope>VARIANT APS1 GLU-83</scope>
    <source>
        <tissue>Thymus</tissue>
    </source>
</reference>
<reference key="2">
    <citation type="journal article" date="1997" name="Nat. Genet.">
        <title>An autoimmune disease, APECED, caused by mutations in a novel gene featuring two PHD-type zinc-finger domains.</title>
        <authorList>
            <person name="Aaltonen J."/>
            <person name="Bjoerses P."/>
            <person name="Perheentupa J."/>
            <person name="Horelli-Kuitunen N."/>
            <person name="Palotie A."/>
            <person name="Peltonen L."/>
            <person name="Lee Y.S."/>
            <person name="Francis F."/>
            <person name="Hennig S."/>
            <person name="Thiel C."/>
            <person name="Lehrach H."/>
            <person name="Yaspo M.-L."/>
        </authorList>
    </citation>
    <scope>NUCLEOTIDE SEQUENCE [GENOMIC DNA / MRNA] (ISOFORM 1)</scope>
    <source>
        <tissue>Thymus</tissue>
    </source>
</reference>
<reference key="3">
    <citation type="submission" date="1998-07" db="EMBL/GenBank/DDBJ databases">
        <authorList>
            <person name="Lee Y.S."/>
            <person name="Francis F."/>
            <person name="Hennig S."/>
            <person name="Thiel C."/>
            <person name="Reinhard R."/>
            <person name="Lehrach H."/>
            <person name="Yaspo M.-L."/>
        </authorList>
    </citation>
    <scope>NUCLEOTIDE SEQUENCE [GENOMIC DNA]</scope>
</reference>
<reference key="4">
    <citation type="journal article" date="2000" name="Nature">
        <title>The DNA sequence of human chromosome 21.</title>
        <authorList>
            <person name="Hattori M."/>
            <person name="Fujiyama A."/>
            <person name="Taylor T.D."/>
            <person name="Watanabe H."/>
            <person name="Yada T."/>
            <person name="Park H.-S."/>
            <person name="Toyoda A."/>
            <person name="Ishii K."/>
            <person name="Totoki Y."/>
            <person name="Choi D.-K."/>
            <person name="Groner Y."/>
            <person name="Soeda E."/>
            <person name="Ohki M."/>
            <person name="Takagi T."/>
            <person name="Sakaki Y."/>
            <person name="Taudien S."/>
            <person name="Blechschmidt K."/>
            <person name="Polley A."/>
            <person name="Menzel U."/>
            <person name="Delabar J."/>
            <person name="Kumpf K."/>
            <person name="Lehmann R."/>
            <person name="Patterson D."/>
            <person name="Reichwald K."/>
            <person name="Rump A."/>
            <person name="Schillhabel M."/>
            <person name="Schudy A."/>
            <person name="Zimmermann W."/>
            <person name="Rosenthal A."/>
            <person name="Kudoh J."/>
            <person name="Shibuya K."/>
            <person name="Kawasaki K."/>
            <person name="Asakawa S."/>
            <person name="Shintani A."/>
            <person name="Sasaki T."/>
            <person name="Nagamine K."/>
            <person name="Mitsuyama S."/>
            <person name="Antonarakis S.E."/>
            <person name="Minoshima S."/>
            <person name="Shimizu N."/>
            <person name="Nordsiek G."/>
            <person name="Hornischer K."/>
            <person name="Brandt P."/>
            <person name="Scharfe M."/>
            <person name="Schoen O."/>
            <person name="Desario A."/>
            <person name="Reichelt J."/>
            <person name="Kauer G."/>
            <person name="Bloecker H."/>
            <person name="Ramser J."/>
            <person name="Beck A."/>
            <person name="Klages S."/>
            <person name="Hennig S."/>
            <person name="Riesselmann L."/>
            <person name="Dagand E."/>
            <person name="Wehrmeyer S."/>
            <person name="Borzym K."/>
            <person name="Gardiner K."/>
            <person name="Nizetic D."/>
            <person name="Francis F."/>
            <person name="Lehrach H."/>
            <person name="Reinhardt R."/>
            <person name="Yaspo M.-L."/>
        </authorList>
    </citation>
    <scope>NUCLEOTIDE SEQUENCE [LARGE SCALE GENOMIC DNA]</scope>
</reference>
<reference key="5">
    <citation type="submission" date="2005-09" db="EMBL/GenBank/DDBJ databases">
        <authorList>
            <person name="Mural R.J."/>
            <person name="Istrail S."/>
            <person name="Sutton G."/>
            <person name="Florea L."/>
            <person name="Halpern A.L."/>
            <person name="Mobarry C.M."/>
            <person name="Lippert R."/>
            <person name="Walenz B."/>
            <person name="Shatkay H."/>
            <person name="Dew I."/>
            <person name="Miller J.R."/>
            <person name="Flanigan M.J."/>
            <person name="Edwards N.J."/>
            <person name="Bolanos R."/>
            <person name="Fasulo D."/>
            <person name="Halldorsson B.V."/>
            <person name="Hannenhalli S."/>
            <person name="Turner R."/>
            <person name="Yooseph S."/>
            <person name="Lu F."/>
            <person name="Nusskern D.R."/>
            <person name="Shue B.C."/>
            <person name="Zheng X.H."/>
            <person name="Zhong F."/>
            <person name="Delcher A.L."/>
            <person name="Huson D.H."/>
            <person name="Kravitz S.A."/>
            <person name="Mouchard L."/>
            <person name="Reinert K."/>
            <person name="Remington K.A."/>
            <person name="Clark A.G."/>
            <person name="Waterman M.S."/>
            <person name="Eichler E.E."/>
            <person name="Adams M.D."/>
            <person name="Hunkapiller M.W."/>
            <person name="Myers E.W."/>
            <person name="Venter J.C."/>
        </authorList>
    </citation>
    <scope>NUCLEOTIDE SEQUENCE [LARGE SCALE GENOMIC DNA]</scope>
</reference>
<reference key="6">
    <citation type="journal article" date="2004" name="Genome Res.">
        <title>The status, quality, and expansion of the NIH full-length cDNA project: the Mammalian Gene Collection (MGC).</title>
        <authorList>
            <consortium name="The MGC Project Team"/>
        </authorList>
    </citation>
    <scope>NUCLEOTIDE SEQUENCE [LARGE SCALE MRNA] (ISOFORM 4)</scope>
</reference>
<reference key="7">
    <citation type="journal article" date="1999" name="Hum. Mol. Genet.">
        <title>Localization of the APECED protein in distinct nuclear structures.</title>
        <authorList>
            <person name="Bjoerses P."/>
            <person name="Pelto-Huikko M."/>
            <person name="Kaukonen J."/>
            <person name="Aaltonen J."/>
            <person name="Peltonen L."/>
            <person name="Ulmanen I."/>
        </authorList>
    </citation>
    <scope>SUBCELLULAR LOCATION</scope>
</reference>
<reference key="8">
    <citation type="journal article" date="2001" name="J. Biol. Chem.">
        <title>The autoimmune regulator (AIRE) is a DNA-binding protein.</title>
        <authorList>
            <person name="Kumar P.G."/>
            <person name="Laloraya M."/>
            <person name="Wang C.-Y."/>
            <person name="Ruan Q.-G."/>
            <person name="Davoodi-Semiromi A."/>
            <person name="Kao K.-J."/>
            <person name="She J.-X."/>
        </authorList>
    </citation>
    <scope>PARTIAL PROTEIN SEQUENCE</scope>
    <scope>SUBUNIT STRUCTURE</scope>
    <scope>DNA-BINDING</scope>
    <scope>PHOSPHORYLATION</scope>
</reference>
<reference key="9">
    <citation type="journal article" date="2000" name="Am. J. Hum. Genet.">
        <title>Mutations in the AIRE gene: effects on subcellular location and transactivation function of the autoimmune polyendocrinopathy-candidiasis-ectodermal dystrophy protein.</title>
        <authorList>
            <person name="Bjeorses P."/>
            <person name="Halonen M."/>
            <person name="Palvimo J.J."/>
            <person name="Kolmer M."/>
            <person name="Aaltonen J."/>
            <person name="Ellonen P."/>
            <person name="Perheentupa J."/>
            <person name="Ulmanen I."/>
            <person name="Peltonen L."/>
        </authorList>
    </citation>
    <scope>SUBCELLULAR LOCATION</scope>
    <scope>VARIANTS APS1 LEU-80; CYS-85; TYR-311 AND GLN-326</scope>
</reference>
<reference key="10">
    <citation type="journal article" date="2001" name="J. Biol. Chem.">
        <title>Subcellular localization of the autoimmune regulator protein. characterization of nuclear targeting and transcriptional activation domain.</title>
        <authorList>
            <person name="Pitkaenen J."/>
            <person name="Vaehaemurto P."/>
            <person name="Krohn K.J.E."/>
            <person name="Peterson P."/>
        </authorList>
    </citation>
    <scope>SUBCELLULAR LOCATION</scope>
    <scope>FUNCTION</scope>
    <scope>MUTAGENESIS OF CYS-302 AND CYS-437</scope>
    <scope>CHARACTERIZATION OF VARIANT APS1 PRO-28</scope>
</reference>
<reference key="11">
    <citation type="journal article" date="2004" name="Hum. Mutat.">
        <title>APECED-causing mutations in AIRE reveal the functional domains of the protein.</title>
        <authorList>
            <person name="Halonen M."/>
            <person name="Kangas H."/>
            <person name="Rueppell T."/>
            <person name="Ilmarinen T."/>
            <person name="Ollila J."/>
            <person name="Kolmer M."/>
            <person name="Vihinen M."/>
            <person name="Palvimo J."/>
            <person name="Saarela J."/>
            <person name="Ulmanen I."/>
            <person name="Eskelin P."/>
        </authorList>
    </citation>
    <scope>SUBCELLULAR LOCATION</scope>
    <scope>HOMOOLIGOMERIZATION</scope>
    <scope>CHARACTERIZATION OF VARIANTS APS1 LEU-15; MET-16; VAL-21; PRO-28; PRO-29; ARG-78; LEU-80; GLU-83; CYS-90; ARG-93; TRP-228 AND GLN-326</scope>
</reference>
<reference key="12">
    <citation type="journal article" date="2008" name="EMBO Rep.">
        <title>The autoimmune regulator PHD finger binds to non-methylated histone H3K4 to activate gene expression.</title>
        <authorList>
            <person name="Org T."/>
            <person name="Chignola F."/>
            <person name="Hetenyi C."/>
            <person name="Gaetani M."/>
            <person name="Rebane A."/>
            <person name="Liiv I."/>
            <person name="Maran U."/>
            <person name="Mollica L."/>
            <person name="Bottomley M.J."/>
            <person name="Musco G."/>
            <person name="Peterson P."/>
        </authorList>
    </citation>
    <scope>INTERACTION WITH HISTONE H3 NON-METHYLATED OR MONO-METHYLATED AT LYS-4</scope>
    <scope>FUNCTION</scope>
    <scope>MUTAGENESIS OF ASP-297 AND ASP-312</scope>
    <scope>CHARACTERIZATION OF VARIANTS APS1 MET-301 AND TYR-311</scope>
</reference>
<reference key="13">
    <citation type="journal article" date="2009" name="Annu. Rev. Immunol.">
        <title>Aire.</title>
        <authorList>
            <person name="Mathis D."/>
            <person name="Benoist C."/>
        </authorList>
    </citation>
    <scope>REVIEW OF FUNCTION IN SELF-TOLERANCE</scope>
</reference>
<reference key="14">
    <citation type="journal article" date="2013" name="Immunity">
        <title>Extrathymic Aire-expressing cells are a distinct bone marrow-derived population that induce functional inactivation of CD4[?] T cells.</title>
        <authorList>
            <person name="Gardner J.M."/>
            <person name="Metzger T.C."/>
            <person name="McMahon E.J."/>
            <person name="Au-Yeung B.B."/>
            <person name="Krawisz A.K."/>
            <person name="Lu W."/>
            <person name="Price J.D."/>
            <person name="Johannes K.P."/>
            <person name="Satpathy A.T."/>
            <person name="Murphy K.M."/>
            <person name="Tarbell K.V."/>
            <person name="Weiss A."/>
            <person name="Anderson M.S."/>
        </authorList>
    </citation>
    <scope>TISSUE SPECIFICITY</scope>
</reference>
<reference key="15">
    <citation type="journal article" date="2016" name="Nat. Rev. Immunol.">
        <title>AIRE expands: new roles in immune tolerance and beyond.</title>
        <authorList>
            <person name="Anderson M.S."/>
            <person name="Su M.A."/>
        </authorList>
    </citation>
    <scope>REVIEW OF FUNCTION IN SELF-TOLERANCE</scope>
</reference>
<reference key="16">
    <citation type="journal article" date="2005" name="J. Biol. Chem.">
        <title>NMR structure of the first PHD finger of autoimmune regulator protein (AIRE1). Insights into autoimmune polyendocrinopathy-candidiasis-ectodermal dystrophy (APECED) disease.</title>
        <authorList>
            <person name="Bottomley M.J."/>
            <person name="Stier G."/>
            <person name="Pennacchini D."/>
            <person name="Legube G."/>
            <person name="Simon B."/>
            <person name="Akhtar A."/>
            <person name="Sattler M."/>
            <person name="Musco G."/>
        </authorList>
    </citation>
    <scope>STRUCTURE BY NMR OF 293-354 IN COMPLEX WITH ZINC IONS</scope>
    <scope>CHARACTERIZATION OF VARIANTS APS1 MET-301; TYR-311 AND GLN-326</scope>
</reference>
<reference key="17">
    <citation type="journal article" date="2009" name="Nucleic Acids Res.">
        <title>The solution structure of the first PHD finger of autoimmune regulator in complex with non-modified histone H3 tail reveals the antagonistic role of H3R2 methylation.</title>
        <authorList>
            <person name="Chignola F."/>
            <person name="Gaetani M."/>
            <person name="Rebane A."/>
            <person name="Org T."/>
            <person name="Mollica L."/>
            <person name="Zucchelli C."/>
            <person name="Spitaleri A."/>
            <person name="Mannella V."/>
            <person name="Peterson P."/>
            <person name="Musco G."/>
        </authorList>
    </citation>
    <scope>STRUCTURE BY NMR OF 293-354 IN COMPLEX WITH ZINC IONS AND UNMETHYLATED HISTONE H3 N-TERMINUS</scope>
    <scope>IDENTIFICATION BY MASS SPECTROMETRY</scope>
    <scope>MUTAGENESIS OF ASN-295; GLU-298; ARG-303; ASP-304 AND GLU-307</scope>
    <scope>INTERACTION WITH HISTOME H3</scope>
</reference>
<reference key="18">
    <citation type="journal article" date="2009" name="Structure">
        <title>Structure and site-specific recognition of histone H3 by the PHD finger of human autoimmune regulator.</title>
        <authorList>
            <person name="Chakravarty S."/>
            <person name="Zeng L."/>
            <person name="Zhou M.-M."/>
        </authorList>
    </citation>
    <scope>STRUCTURE BY NMR OF 294-347 IN COMPLEX WITH ZINC IONS AND UNMETHYLATED HISTONE H3 N-TERMINUS</scope>
    <scope>CHARACTERIZATION OF VARIANTS APS1 MET-301; TYR-311; LEU-326 AND GLN-326</scope>
</reference>
<reference key="19">
    <citation type="journal article" date="1999" name="Hum. Mutat.">
        <title>Mutation analyses of North American APS-1 patients.</title>
        <authorList>
            <person name="Heino M."/>
            <person name="Scott H.S."/>
            <person name="Chen Q."/>
            <person name="Peterson P."/>
            <person name="Maeenpaeae U."/>
            <person name="Papasavvas M.-P."/>
            <person name="Mittaz L."/>
            <person name="Barras C."/>
            <person name="Rossier C."/>
            <person name="Chrousos G.P."/>
            <person name="Stratakis C.A."/>
            <person name="Nagamine K."/>
            <person name="Kudoh J."/>
            <person name="Shimizu N."/>
            <person name="Maclaren N."/>
            <person name="Antonarakis S.E."/>
            <person name="Krohn K.J.E."/>
        </authorList>
    </citation>
    <scope>VARIANT APS1 PRO-28</scope>
</reference>
<reference key="20">
    <citation type="journal article" date="1998" name="Mol. Endocrinol.">
        <title>Common mutations in autoimmune polyendocrinopathy-candidiasis-ectodermal dystrophy patients of different origins.</title>
        <authorList>
            <person name="Scott H.S."/>
            <person name="Heino M."/>
            <person name="Peterson P."/>
            <person name="Mittaz L."/>
            <person name="Lalioti M.D."/>
            <person name="Betterle C."/>
            <person name="Cohen A."/>
            <person name="Seri M."/>
            <person name="Lerone M."/>
            <person name="Romeo G."/>
            <person name="Collin P."/>
            <person name="Salo M."/>
            <person name="Metcalfe R."/>
            <person name="Weetman A."/>
            <person name="Papasavvas M.-P."/>
            <person name="Rossier C."/>
            <person name="Nagamine K."/>
            <person name="Kudoh J."/>
            <person name="Shimizu N."/>
            <person name="Krohn K.J.E."/>
            <person name="Antonarakis S.E."/>
        </authorList>
    </citation>
    <scope>VARIANT ARG-278</scope>
</reference>
<reference key="21">
    <citation type="journal article" date="2001" name="Eur. J. Endocrinol.">
        <title>Identification of a novel mutation in the autoimmune regulator (AIRE-1) gene in a French family with autoimmune polyendocrinopathy-candidiasis-ectodermal dystrophy.</title>
        <authorList>
            <person name="Saugier-Veber P."/>
            <person name="Drouot N."/>
            <person name="Wolf L.M."/>
            <person name="Kuhn J.M."/>
            <person name="Frebourg T."/>
            <person name="Lefebvre H."/>
        </authorList>
    </citation>
    <scope>VARIANT APS1 LEU-326</scope>
</reference>
<reference key="22">
    <citation type="journal article" date="2001" name="Hum. Mutat.">
        <title>APECED mutations in the autoimmune regulator (AIRE) gene.</title>
        <authorList>
            <person name="Heino M."/>
            <person name="Peterson P."/>
            <person name="Kudoh J."/>
            <person name="Shimizu N."/>
            <person name="Antonarakis S.E."/>
            <person name="Scott H.S."/>
            <person name="Krohn K.J.E."/>
        </authorList>
    </citation>
    <scope>VARIANTS APS1 LEU-15; MET-16; PRO-28; PRO-29; ARG-78; LEU-80; GLU-83; CYS-85; CYS-90; ARG-93; MET-301; TYR-311 AND GLN-326</scope>
    <scope>VARIANT ARG-278</scope>
</reference>
<reference key="23">
    <citation type="journal article" date="2001" name="Hum. Mutat.">
        <title>Novel AIRE mutations and P450 cytochrome autoantibodies in Central and Eastern European patients with APECED.</title>
        <authorList>
            <consortium name="The MEWPE-APECED study group"/>
            <person name="Cihakova D."/>
            <person name="Trebusak K."/>
            <person name="Heino M."/>
            <person name="Fadeyev V."/>
            <person name="Tiulpakov A."/>
            <person name="Battelino T."/>
            <person name="Tar A."/>
            <person name="Halasz Z."/>
            <person name="Bluemel P."/>
            <person name="Tawfik S."/>
            <person name="Krohn K."/>
            <person name="Lebl J."/>
            <person name="Peterson P."/>
        </authorList>
    </citation>
    <scope>VARIANTS APS1 MET-16 AND ARG-78</scope>
</reference>
<reference key="24">
    <citation type="journal article" date="2001" name="J. Clin. Endocrinol. Metab.">
        <title>A novel mutation of the autoimmune regulator gene in an Italian kindred with autoimmune polyendocrinopathy-candidiasis-ectodermal dystrophy, acting in a dominant fashion and strongly cosegregating with hypothyroid autoimmune thyroiditis.</title>
        <authorList>
            <person name="Cetani F."/>
            <person name="Barbesino G."/>
            <person name="Borsari S."/>
            <person name="Pardi E."/>
            <person name="Cianferotti L."/>
            <person name="Pinchera A."/>
            <person name="Marcocci C."/>
        </authorList>
    </citation>
    <scope>VARIANT APS1 TRP-228</scope>
</reference>
<reference key="25">
    <citation type="journal article" date="2002" name="Clin. Immunol.">
        <title>Distinct clinical phenotype and immunoreactivity in Japanese siblings with autoimmune polyglandular syndrome type 1 (APS-1) associated with compound heterozygous novel AIRE gene mutations.</title>
        <authorList>
            <person name="Kogawa K."/>
            <person name="Kudoh J."/>
            <person name="Nagafuchi S."/>
            <person name="Ohga S."/>
            <person name="Katsuta H."/>
            <person name="Ishibashi H."/>
            <person name="Harada M."/>
            <person name="Hara T."/>
            <person name="Shimizu N."/>
        </authorList>
    </citation>
    <scope>VARIANT APS1 PRO-29</scope>
</reference>
<reference key="26">
    <citation type="journal article" date="2002" name="Endocr. J.">
        <title>A novel missense mutation of AIRE gene in a patient with autoimmune polyendocrinopathy, candidiasis and ectodermal dystrophy (APECED), accompanied with progressive muscular atrophy: case report and review of the literature in Japan.</title>
        <authorList>
            <person name="Sato K."/>
            <person name="Nakajima K."/>
            <person name="Imamura H."/>
            <person name="Deguchi T."/>
            <person name="Horinouchi S."/>
            <person name="Yamazaki K."/>
            <person name="Yamada E."/>
            <person name="Kanaji Y."/>
            <person name="Takano K."/>
        </authorList>
    </citation>
    <scope>VARIANT APS1 CYS-15</scope>
    <scope>VARIANT ARG-278</scope>
</reference>
<reference key="27">
    <citation type="journal article" date="2002" name="J. Clin. Endocrinol. Metab.">
        <title>Delineation of the molecular defects in the AIRE gene in autoimmune polyendocrinopathy-candidiasis-ectodermal dystrophy patients from Southern Italy.</title>
        <authorList>
            <person name="Meloni A."/>
            <person name="Perniola R."/>
            <person name="Faa V."/>
            <person name="Corvaglia E."/>
            <person name="Cao A."/>
            <person name="Rosatelli M.C."/>
        </authorList>
    </citation>
    <scope>VARIANTS APS1 ARG-78; LEU-252 AND LEU-539</scope>
</reference>
<reference key="28">
    <citation type="journal article" date="2002" name="J. Clin. Endocrinol. Metab.">
        <title>AIRE mutations and human leukocyte antigen genotypes as determinants of the autoimmune polyendocrinopathy-candidiasis-ectodermal dystrophy phenotype.</title>
        <authorList>
            <person name="Halonen M."/>
            <person name="Eskelin P."/>
            <person name="Myhre A.-G."/>
            <person name="Perheentupa J."/>
            <person name="Husebye E.S."/>
            <person name="Kaempe O."/>
            <person name="Rorsman F."/>
            <person name="Peltonen L."/>
            <person name="Ulmanen I."/>
            <person name="Partanen J."/>
        </authorList>
    </citation>
    <scope>VARIANTS APS1 VAL-21; CYS-85 AND TYR-311</scope>
</reference>
<reference key="29">
    <citation type="journal article" date="2005" name="Hum. Mutat.">
        <title>Two novel mutations of the AIRE protein affecting its homodimerization properties.</title>
        <authorList>
            <person name="Meloni A."/>
            <person name="Fiorillo E."/>
            <person name="Corda D."/>
            <person name="Perniola R."/>
            <person name="Cao A."/>
            <person name="Rosatelli M.C."/>
        </authorList>
    </citation>
    <scope>VARIANTS APS1 22-VAL-ASP-23 DEL; SER-77 AND ARG-78</scope>
    <scope>CHARACTERIZATION OF VARIANTS APS1 LEU-15; MET-16; 22-VAL-ASP-23 DEL; SER-77 AND ARG-78</scope>
</reference>
<reference key="30">
    <citation type="journal article" date="2005" name="Hum. Mutat.">
        <title>Functional analysis of SAND mutations in AIRE supports dominant inheritance of the G228W mutation.</title>
        <authorList>
            <person name="Ilmarinen T."/>
            <person name="Eskelin P."/>
            <person name="Halonen M."/>
            <person name="Rueppell T."/>
            <person name="Kilpikari R."/>
            <person name="Torres G.D."/>
            <person name="Kangas H."/>
            <person name="Ulmanen I."/>
        </authorList>
    </citation>
    <scope>CHARACTERIZATION OF VARIANTS APS1 PRO-28; CYS-85; TRP-228 AND LEU-252</scope>
</reference>
<reference key="31">
    <citation type="journal article" date="2015" name="Immunity">
        <title>Dominant mutations in the autoimmune regulator AIRE are associated with common organ-specific autoimmune diseases.</title>
        <authorList>
            <person name="Oftedal B.E."/>
            <person name="Hellesen A."/>
            <person name="Erichsen M.M."/>
            <person name="Bratland E."/>
            <person name="Vardi A."/>
            <person name="Perheentupa J."/>
            <person name="Kemp E.H."/>
            <person name="Fiskerstrand T."/>
            <person name="Viken M.K."/>
            <person name="Weetman A.P."/>
            <person name="Fleishman S.J."/>
            <person name="Banka S."/>
            <person name="Newman W.G."/>
            <person name="Sewell W.A."/>
            <person name="Sozaeva L.S."/>
            <person name="Zayats T."/>
            <person name="Haugarvoll K."/>
            <person name="Orlova E.M."/>
            <person name="Haavik J."/>
            <person name="Johansson S."/>
            <person name="Knappskog P.M."/>
            <person name="Loevaas K."/>
            <person name="Wolff A.S."/>
            <person name="Abramson J."/>
            <person name="Husebye E.S."/>
        </authorList>
    </citation>
    <scope>INVOLVEMENT IN APS1</scope>
    <scope>FUNCTION</scope>
    <scope>SUBCELLULAR LOCATION</scope>
    <scope>VARIANTS APS1 PRO-28; CYS-90; MET-301; TYR-311 AND LEU-326</scope>
    <scope>CHARACTERIZATION OF VARIANTS PRO-28; CYS-90; MET-301; TYR-311 AND LEU-326</scope>
    <scope>MUTAGENESIS OF 28-LEU-LEU-29; LEU-97; ASP-297; ARG-303; ASP-312; CYS-446 AND ARG-471</scope>
    <scope>VARIANTS LYS-298; TRP-299; TYR-302; GLN-303; TRP-303; SER-305; ARG-306; MET-309; GLN-316; TRP-316; PRO-319; GLN-328; TRP-328; ARG-332 AND ALA-484</scope>
    <scope>CHARACTERIZATION OF VARIANTS LYS-298; TYR-302; SER-305 AND GLN-328</scope>
</reference>
<reference key="32">
    <citation type="journal article" date="2016" name="Cell">
        <title>AIRE-deficient patients harbor unique high-affinity disease-ameliorating autoantibodies.</title>
        <authorList>
            <consortium name="APECED patient collaborative"/>
            <person name="Meyer S."/>
            <person name="Woodward M."/>
            <person name="Hertel C."/>
            <person name="Vlaicu P."/>
            <person name="Haque Y."/>
            <person name="Kaerner J."/>
            <person name="Macagno A."/>
            <person name="Onuoha S.C."/>
            <person name="Fishman D."/>
            <person name="Peterson H."/>
            <person name="Metskuela K."/>
            <person name="Uibo R."/>
            <person name="Jaentti K."/>
            <person name="Hokynar K."/>
            <person name="Wolff A.S."/>
            <person name="Krohn K."/>
            <person name="Ranki A."/>
            <person name="Peterson P."/>
            <person name="Kisand K."/>
            <person name="Hayday A."/>
        </authorList>
    </citation>
    <scope>INVOLVEMENT IN APS1</scope>
    <scope>FUNCTION</scope>
</reference>
<evidence type="ECO:0000250" key="1">
    <source>
        <dbReference type="UniProtKB" id="Q9Z0E3"/>
    </source>
</evidence>
<evidence type="ECO:0000255" key="2">
    <source>
        <dbReference type="PROSITE-ProRule" id="PRU00146"/>
    </source>
</evidence>
<evidence type="ECO:0000255" key="3">
    <source>
        <dbReference type="PROSITE-ProRule" id="PRU00185"/>
    </source>
</evidence>
<evidence type="ECO:0000255" key="4">
    <source>
        <dbReference type="PROSITE-ProRule" id="PRU00747"/>
    </source>
</evidence>
<evidence type="ECO:0000256" key="5">
    <source>
        <dbReference type="SAM" id="MobiDB-lite"/>
    </source>
</evidence>
<evidence type="ECO:0000269" key="6">
    <source>
    </source>
</evidence>
<evidence type="ECO:0000269" key="7">
    <source>
    </source>
</evidence>
<evidence type="ECO:0000269" key="8">
    <source>
    </source>
</evidence>
<evidence type="ECO:0000269" key="9">
    <source>
    </source>
</evidence>
<evidence type="ECO:0000269" key="10">
    <source>
    </source>
</evidence>
<evidence type="ECO:0000269" key="11">
    <source>
    </source>
</evidence>
<evidence type="ECO:0000269" key="12">
    <source>
    </source>
</evidence>
<evidence type="ECO:0000269" key="13">
    <source>
    </source>
</evidence>
<evidence type="ECO:0000269" key="14">
    <source>
    </source>
</evidence>
<evidence type="ECO:0000269" key="15">
    <source>
    </source>
</evidence>
<evidence type="ECO:0000269" key="16">
    <source>
    </source>
</evidence>
<evidence type="ECO:0000269" key="17">
    <source>
    </source>
</evidence>
<evidence type="ECO:0000269" key="18">
    <source>
    </source>
</evidence>
<evidence type="ECO:0000269" key="19">
    <source>
    </source>
</evidence>
<evidence type="ECO:0000269" key="20">
    <source>
    </source>
</evidence>
<evidence type="ECO:0000269" key="21">
    <source>
    </source>
</evidence>
<evidence type="ECO:0000269" key="22">
    <source>
    </source>
</evidence>
<evidence type="ECO:0000269" key="23">
    <source>
    </source>
</evidence>
<evidence type="ECO:0000269" key="24">
    <source>
    </source>
</evidence>
<evidence type="ECO:0000269" key="25">
    <source>
    </source>
</evidence>
<evidence type="ECO:0000269" key="26">
    <source>
    </source>
</evidence>
<evidence type="ECO:0000269" key="27">
    <source>
    </source>
</evidence>
<evidence type="ECO:0000269" key="28">
    <source>
    </source>
</evidence>
<evidence type="ECO:0000269" key="29">
    <source>
    </source>
</evidence>
<evidence type="ECO:0000303" key="30">
    <source>
    </source>
</evidence>
<evidence type="ECO:0000303" key="31">
    <source>
    </source>
</evidence>
<evidence type="ECO:0000305" key="32"/>
<evidence type="ECO:0000305" key="33">
    <source>
    </source>
</evidence>
<evidence type="ECO:0000305" key="34">
    <source>
    </source>
</evidence>
<evidence type="ECO:0007829" key="35">
    <source>
        <dbReference type="PDB" id="1XWH"/>
    </source>
</evidence>
<evidence type="ECO:0007829" key="36">
    <source>
        <dbReference type="PDB" id="2KE1"/>
    </source>
</evidence>
<evidence type="ECO:0007829" key="37">
    <source>
        <dbReference type="PDB" id="2LRI"/>
    </source>
</evidence>